<protein>
    <recommendedName>
        <fullName evidence="1">Aspartate/glutamate leucyltransferase</fullName>
        <ecNumber evidence="1">2.3.2.29</ecNumber>
    </recommendedName>
</protein>
<comment type="function">
    <text evidence="1">Functions in the N-end rule pathway of protein degradation where it conjugates Leu from its aminoacyl-tRNA to the N-termini of proteins containing an N-terminal aspartate or glutamate.</text>
</comment>
<comment type="catalytic activity">
    <reaction evidence="1">
        <text>N-terminal L-glutamyl-[protein] + L-leucyl-tRNA(Leu) = N-terminal L-leucyl-L-glutamyl-[protein] + tRNA(Leu) + H(+)</text>
        <dbReference type="Rhea" id="RHEA:50412"/>
        <dbReference type="Rhea" id="RHEA-COMP:9613"/>
        <dbReference type="Rhea" id="RHEA-COMP:9622"/>
        <dbReference type="Rhea" id="RHEA-COMP:12664"/>
        <dbReference type="Rhea" id="RHEA-COMP:12668"/>
        <dbReference type="ChEBI" id="CHEBI:15378"/>
        <dbReference type="ChEBI" id="CHEBI:64721"/>
        <dbReference type="ChEBI" id="CHEBI:78442"/>
        <dbReference type="ChEBI" id="CHEBI:78494"/>
        <dbReference type="ChEBI" id="CHEBI:133041"/>
        <dbReference type="EC" id="2.3.2.29"/>
    </reaction>
</comment>
<comment type="catalytic activity">
    <reaction evidence="1">
        <text>N-terminal L-aspartyl-[protein] + L-leucyl-tRNA(Leu) = N-terminal L-leucyl-L-aspartyl-[protein] + tRNA(Leu) + H(+)</text>
        <dbReference type="Rhea" id="RHEA:50420"/>
        <dbReference type="Rhea" id="RHEA-COMP:9613"/>
        <dbReference type="Rhea" id="RHEA-COMP:9622"/>
        <dbReference type="Rhea" id="RHEA-COMP:12669"/>
        <dbReference type="Rhea" id="RHEA-COMP:12674"/>
        <dbReference type="ChEBI" id="CHEBI:15378"/>
        <dbReference type="ChEBI" id="CHEBI:64720"/>
        <dbReference type="ChEBI" id="CHEBI:78442"/>
        <dbReference type="ChEBI" id="CHEBI:78494"/>
        <dbReference type="ChEBI" id="CHEBI:133042"/>
        <dbReference type="EC" id="2.3.2.29"/>
    </reaction>
</comment>
<comment type="subcellular location">
    <subcellularLocation>
        <location evidence="1">Cytoplasm</location>
    </subcellularLocation>
</comment>
<comment type="similarity">
    <text evidence="1">Belongs to the R-transferase family. Bpt subfamily.</text>
</comment>
<keyword id="KW-0012">Acyltransferase</keyword>
<keyword id="KW-0963">Cytoplasm</keyword>
<keyword id="KW-0808">Transferase</keyword>
<name>BPT_XANOP</name>
<feature type="chain" id="PRO_1000132001" description="Aspartate/glutamate leucyltransferase">
    <location>
        <begin position="1"/>
        <end position="251"/>
    </location>
</feature>
<sequence>MAIHADTHDDLRLFQTGEHACGYWSDRRARDLVLDPHDPRLGAIYPQALAWGFRRSGDLVYRPHCERCRACVPVRIAVDAFHPDRSQRRCLTRNQDLVVRVVAAERTDEQLALYRQYLKYRHPGGGMDEHGATEFDQFLIGGWSHGRFLEIREPAIAHLPGRLLAVAVTDVTEHALSAVYTFYAPEAAARSLGTFAILQQIQWAQRERRAHVYLGYWIEGHAKMNYKRRFSALEAYDGRHWCDLPAHPSGT</sequence>
<dbReference type="EC" id="2.3.2.29" evidence="1"/>
<dbReference type="EMBL" id="CP000967">
    <property type="protein sequence ID" value="ACD58153.1"/>
    <property type="molecule type" value="Genomic_DNA"/>
</dbReference>
<dbReference type="RefSeq" id="WP_011408085.1">
    <property type="nucleotide sequence ID" value="NC_010717.2"/>
</dbReference>
<dbReference type="SMR" id="B2STA8"/>
<dbReference type="KEGG" id="xop:PXO_04859"/>
<dbReference type="eggNOG" id="COG2935">
    <property type="taxonomic scope" value="Bacteria"/>
</dbReference>
<dbReference type="HOGENOM" id="CLU_077607_0_0_6"/>
<dbReference type="Proteomes" id="UP000001740">
    <property type="component" value="Chromosome"/>
</dbReference>
<dbReference type="GO" id="GO:0005737">
    <property type="term" value="C:cytoplasm"/>
    <property type="evidence" value="ECO:0007669"/>
    <property type="project" value="UniProtKB-SubCell"/>
</dbReference>
<dbReference type="GO" id="GO:0004057">
    <property type="term" value="F:arginyl-tRNA--protein transferase activity"/>
    <property type="evidence" value="ECO:0007669"/>
    <property type="project" value="InterPro"/>
</dbReference>
<dbReference type="GO" id="GO:0008914">
    <property type="term" value="F:leucyl-tRNA--protein transferase activity"/>
    <property type="evidence" value="ECO:0007669"/>
    <property type="project" value="UniProtKB-UniRule"/>
</dbReference>
<dbReference type="GO" id="GO:0071596">
    <property type="term" value="P:ubiquitin-dependent protein catabolic process via the N-end rule pathway"/>
    <property type="evidence" value="ECO:0007669"/>
    <property type="project" value="InterPro"/>
</dbReference>
<dbReference type="HAMAP" id="MF_00689">
    <property type="entry name" value="Bpt"/>
    <property type="match status" value="1"/>
</dbReference>
<dbReference type="InterPro" id="IPR016181">
    <property type="entry name" value="Acyl_CoA_acyltransferase"/>
</dbReference>
<dbReference type="InterPro" id="IPR017138">
    <property type="entry name" value="Asp_Glu_LeuTrfase"/>
</dbReference>
<dbReference type="InterPro" id="IPR030700">
    <property type="entry name" value="N-end_Aminoacyl_Trfase"/>
</dbReference>
<dbReference type="InterPro" id="IPR007472">
    <property type="entry name" value="N-end_Aminoacyl_Trfase_C"/>
</dbReference>
<dbReference type="InterPro" id="IPR007471">
    <property type="entry name" value="N-end_Aminoacyl_Trfase_N"/>
</dbReference>
<dbReference type="NCBIfam" id="NF002341">
    <property type="entry name" value="PRK01305.1-1"/>
    <property type="match status" value="1"/>
</dbReference>
<dbReference type="NCBIfam" id="NF002342">
    <property type="entry name" value="PRK01305.1-3"/>
    <property type="match status" value="1"/>
</dbReference>
<dbReference type="NCBIfam" id="NF002346">
    <property type="entry name" value="PRK01305.2-3"/>
    <property type="match status" value="1"/>
</dbReference>
<dbReference type="PANTHER" id="PTHR21367">
    <property type="entry name" value="ARGININE-TRNA-PROTEIN TRANSFERASE 1"/>
    <property type="match status" value="1"/>
</dbReference>
<dbReference type="PANTHER" id="PTHR21367:SF1">
    <property type="entry name" value="ARGINYL-TRNA--PROTEIN TRANSFERASE 1"/>
    <property type="match status" value="1"/>
</dbReference>
<dbReference type="Pfam" id="PF04377">
    <property type="entry name" value="ATE_C"/>
    <property type="match status" value="1"/>
</dbReference>
<dbReference type="Pfam" id="PF04376">
    <property type="entry name" value="ATE_N"/>
    <property type="match status" value="1"/>
</dbReference>
<dbReference type="PIRSF" id="PIRSF037208">
    <property type="entry name" value="ATE_pro_prd"/>
    <property type="match status" value="1"/>
</dbReference>
<dbReference type="SUPFAM" id="SSF55729">
    <property type="entry name" value="Acyl-CoA N-acyltransferases (Nat)"/>
    <property type="match status" value="1"/>
</dbReference>
<proteinExistence type="inferred from homology"/>
<evidence type="ECO:0000255" key="1">
    <source>
        <dbReference type="HAMAP-Rule" id="MF_00689"/>
    </source>
</evidence>
<reference key="1">
    <citation type="journal article" date="2008" name="BMC Genomics">
        <title>Genome sequence and rapid evolution of the rice pathogen Xanthomonas oryzae pv. oryzae PXO99A.</title>
        <authorList>
            <person name="Salzberg S.L."/>
            <person name="Sommer D.D."/>
            <person name="Schatz M.C."/>
            <person name="Phillippy A.M."/>
            <person name="Rabinowicz P.D."/>
            <person name="Tsuge S."/>
            <person name="Furutani A."/>
            <person name="Ochiai H."/>
            <person name="Delcher A.L."/>
            <person name="Kelley D."/>
            <person name="Madupu R."/>
            <person name="Puiu D."/>
            <person name="Radune D."/>
            <person name="Shumway M."/>
            <person name="Trapnell C."/>
            <person name="Aparna G."/>
            <person name="Jha G."/>
            <person name="Pandey A."/>
            <person name="Patil P.B."/>
            <person name="Ishihara H."/>
            <person name="Meyer D.F."/>
            <person name="Szurek B."/>
            <person name="Verdier V."/>
            <person name="Koebnik R."/>
            <person name="Dow J.M."/>
            <person name="Ryan R.P."/>
            <person name="Hirata H."/>
            <person name="Tsuyumu S."/>
            <person name="Won Lee S."/>
            <person name="Seo Y.-S."/>
            <person name="Sriariyanum M."/>
            <person name="Ronald P.C."/>
            <person name="Sonti R.V."/>
            <person name="Van Sluys M.-A."/>
            <person name="Leach J.E."/>
            <person name="White F.F."/>
            <person name="Bogdanove A.J."/>
        </authorList>
    </citation>
    <scope>NUCLEOTIDE SEQUENCE [LARGE SCALE GENOMIC DNA]</scope>
    <source>
        <strain>PXO99A</strain>
    </source>
</reference>
<accession>B2STA8</accession>
<gene>
    <name evidence="1" type="primary">bpt</name>
    <name type="ordered locus">PXO_04859</name>
</gene>
<organism>
    <name type="scientific">Xanthomonas oryzae pv. oryzae (strain PXO99A)</name>
    <dbReference type="NCBI Taxonomy" id="360094"/>
    <lineage>
        <taxon>Bacteria</taxon>
        <taxon>Pseudomonadati</taxon>
        <taxon>Pseudomonadota</taxon>
        <taxon>Gammaproteobacteria</taxon>
        <taxon>Lysobacterales</taxon>
        <taxon>Lysobacteraceae</taxon>
        <taxon>Xanthomonas</taxon>
    </lineage>
</organism>